<dbReference type="EMBL" id="AB025631">
    <property type="protein sequence ID" value="BAB01291.1"/>
    <property type="molecule type" value="Genomic_DNA"/>
</dbReference>
<dbReference type="EMBL" id="AP000417">
    <property type="protein sequence ID" value="BAB01291.1"/>
    <property type="status" value="JOINED"/>
    <property type="molecule type" value="Genomic_DNA"/>
</dbReference>
<dbReference type="EMBL" id="CP002686">
    <property type="protein sequence ID" value="AEE76284.1"/>
    <property type="molecule type" value="Genomic_DNA"/>
</dbReference>
<dbReference type="EMBL" id="AY045810">
    <property type="protein sequence ID" value="AAK76484.1"/>
    <property type="molecule type" value="mRNA"/>
</dbReference>
<dbReference type="EMBL" id="AY079338">
    <property type="protein sequence ID" value="AAL85069.1"/>
    <property type="molecule type" value="mRNA"/>
</dbReference>
<dbReference type="RefSeq" id="NP_566645.1">
    <molecule id="Q9LT31-1"/>
    <property type="nucleotide sequence ID" value="NM_112867.5"/>
</dbReference>
<dbReference type="PDB" id="2EFC">
    <property type="method" value="X-ray"/>
    <property type="resolution" value="2.09 A"/>
    <property type="chains" value="A/C=1-265"/>
</dbReference>
<dbReference type="PDB" id="2EFD">
    <property type="method" value="X-ray"/>
    <property type="resolution" value="3.00 A"/>
    <property type="chains" value="A/C=1-265"/>
</dbReference>
<dbReference type="PDB" id="2EFE">
    <property type="method" value="X-ray"/>
    <property type="resolution" value="2.08 A"/>
    <property type="chains" value="A/C=1-265"/>
</dbReference>
<dbReference type="PDB" id="2EFH">
    <property type="method" value="X-ray"/>
    <property type="resolution" value="2.10 A"/>
    <property type="chains" value="A/C=1-265"/>
</dbReference>
<dbReference type="PDB" id="4G01">
    <property type="method" value="X-ray"/>
    <property type="resolution" value="2.20 A"/>
    <property type="chains" value="A=1-265"/>
</dbReference>
<dbReference type="PDBsum" id="2EFC"/>
<dbReference type="PDBsum" id="2EFD"/>
<dbReference type="PDBsum" id="2EFE"/>
<dbReference type="PDBsum" id="2EFH"/>
<dbReference type="PDBsum" id="4G01"/>
<dbReference type="SMR" id="Q9LT31"/>
<dbReference type="BioGRID" id="6846">
    <property type="interactions" value="1"/>
</dbReference>
<dbReference type="FunCoup" id="Q9LT31">
    <property type="interactions" value="1028"/>
</dbReference>
<dbReference type="STRING" id="3702.Q9LT31"/>
<dbReference type="iPTMnet" id="Q9LT31"/>
<dbReference type="PaxDb" id="3702-AT3G19770.1"/>
<dbReference type="ProteomicsDB" id="242780">
    <molecule id="Q9LT31-1"/>
</dbReference>
<dbReference type="EnsemblPlants" id="AT3G19770.1">
    <molecule id="Q9LT31-1"/>
    <property type="protein sequence ID" value="AT3G19770.1"/>
    <property type="gene ID" value="AT3G19770"/>
</dbReference>
<dbReference type="GeneID" id="821514"/>
<dbReference type="Gramene" id="AT3G19770.1">
    <molecule id="Q9LT31-1"/>
    <property type="protein sequence ID" value="AT3G19770.1"/>
    <property type="gene ID" value="AT3G19770"/>
</dbReference>
<dbReference type="KEGG" id="ath:AT3G19770"/>
<dbReference type="Araport" id="AT3G19770"/>
<dbReference type="TAIR" id="AT3G19770">
    <property type="gene designation" value="VPS9A"/>
</dbReference>
<dbReference type="eggNOG" id="KOG2319">
    <property type="taxonomic scope" value="Eukaryota"/>
</dbReference>
<dbReference type="HOGENOM" id="CLU_036671_1_0_1"/>
<dbReference type="InParanoid" id="Q9LT31"/>
<dbReference type="OMA" id="FREYPYL"/>
<dbReference type="OrthoDB" id="300289at2759"/>
<dbReference type="PhylomeDB" id="Q9LT31"/>
<dbReference type="EvolutionaryTrace" id="Q9LT31"/>
<dbReference type="PRO" id="PR:Q9LT31"/>
<dbReference type="Proteomes" id="UP000006548">
    <property type="component" value="Chromosome 3"/>
</dbReference>
<dbReference type="ExpressionAtlas" id="Q9LT31">
    <property type="expression patterns" value="baseline and differential"/>
</dbReference>
<dbReference type="GO" id="GO:0005525">
    <property type="term" value="F:GTP binding"/>
    <property type="evidence" value="ECO:0007669"/>
    <property type="project" value="UniProtKB-KW"/>
</dbReference>
<dbReference type="GO" id="GO:0005096">
    <property type="term" value="F:GTPase activator activity"/>
    <property type="evidence" value="ECO:0007669"/>
    <property type="project" value="UniProtKB-KW"/>
</dbReference>
<dbReference type="GO" id="GO:0005085">
    <property type="term" value="F:guanyl-nucleotide exchange factor activity"/>
    <property type="evidence" value="ECO:0000314"/>
    <property type="project" value="TAIR"/>
</dbReference>
<dbReference type="GO" id="GO:0000919">
    <property type="term" value="P:cell plate assembly"/>
    <property type="evidence" value="ECO:0000315"/>
    <property type="project" value="TAIR"/>
</dbReference>
<dbReference type="GO" id="GO:0042546">
    <property type="term" value="P:cell wall biogenesis"/>
    <property type="evidence" value="ECO:0000315"/>
    <property type="project" value="TAIR"/>
</dbReference>
<dbReference type="GO" id="GO:0009793">
    <property type="term" value="P:embryo development ending in seed dormancy"/>
    <property type="evidence" value="ECO:0000315"/>
    <property type="project" value="TAIR"/>
</dbReference>
<dbReference type="GO" id="GO:0045324">
    <property type="term" value="P:late endosome to vacuole transport"/>
    <property type="evidence" value="ECO:0000316"/>
    <property type="project" value="TAIR"/>
</dbReference>
<dbReference type="GO" id="GO:0048528">
    <property type="term" value="P:post-embryonic root development"/>
    <property type="evidence" value="ECO:0000315"/>
    <property type="project" value="TAIR"/>
</dbReference>
<dbReference type="FunFam" id="1.10.246.120:FF:000003">
    <property type="entry name" value="Vacuolar protein sorting-associated protein 9A"/>
    <property type="match status" value="1"/>
</dbReference>
<dbReference type="FunFam" id="1.20.1050.80:FF:000007">
    <property type="entry name" value="Vacuolar protein sorting-associated protein 9A"/>
    <property type="match status" value="1"/>
</dbReference>
<dbReference type="Gene3D" id="1.10.246.120">
    <property type="match status" value="1"/>
</dbReference>
<dbReference type="Gene3D" id="1.20.1050.80">
    <property type="entry name" value="VPS9 domain"/>
    <property type="match status" value="1"/>
</dbReference>
<dbReference type="InterPro" id="IPR041545">
    <property type="entry name" value="DUF5601"/>
</dbReference>
<dbReference type="InterPro" id="IPR003123">
    <property type="entry name" value="VPS9"/>
</dbReference>
<dbReference type="InterPro" id="IPR045046">
    <property type="entry name" value="Vps9-like"/>
</dbReference>
<dbReference type="InterPro" id="IPR037191">
    <property type="entry name" value="VPS9_dom_sf"/>
</dbReference>
<dbReference type="PANTHER" id="PTHR23101:SF25">
    <property type="entry name" value="GTPASE-ACTIVATING PROTEIN AND VPS9 DOMAIN-CONTAINING PROTEIN 1"/>
    <property type="match status" value="1"/>
</dbReference>
<dbReference type="PANTHER" id="PTHR23101">
    <property type="entry name" value="RAB GDP/GTP EXCHANGE FACTOR"/>
    <property type="match status" value="1"/>
</dbReference>
<dbReference type="Pfam" id="PF18151">
    <property type="entry name" value="DUF5601"/>
    <property type="match status" value="1"/>
</dbReference>
<dbReference type="Pfam" id="PF02204">
    <property type="entry name" value="VPS9"/>
    <property type="match status" value="1"/>
</dbReference>
<dbReference type="SMART" id="SM00167">
    <property type="entry name" value="VPS9"/>
    <property type="match status" value="1"/>
</dbReference>
<dbReference type="SUPFAM" id="SSF109993">
    <property type="entry name" value="VPS9 domain"/>
    <property type="match status" value="1"/>
</dbReference>
<dbReference type="PROSITE" id="PS51205">
    <property type="entry name" value="VPS9"/>
    <property type="match status" value="1"/>
</dbReference>
<sequence>MENTDVFLGLHDFLERMRKPSAGDFVKSIKSFIVSFSNNAPDPEKDCAMVQEFFSKMEAAFRAHPLWSGCSEEELDSAGDGLEKYVMTKLFTRVFASNTEEVIADEKLFQKMSLVQQFISPENLDIQPTFQNESSWLLAQKELQKINMYKAPRDKLVCILNCCKVINNLLLNASIASNENAPGADEFLPVLIYVTIKANPPQLHSNLLYIQRYRRESKLVGEAAYFFTNILSAESFISNIDAKSISLDEAEFEKNMESARARISGLDSQTYQTGHGSAPPPRDESTLQKTQSLNPKRENTLFQSKSSDSLSGTNELLNINSETPMKKAESISDLENKGATLLKDTEPSKVFQEYPYIFASAGDLRIGDVEGLLNSYKQLVFKYVCLTKGLGDGTSLAPSSSPLQASSGFNTSKESEDHRRSSSDVQMTKETDRSVDDLIRALHGEGEDVNNLSDVKHEEYGAMLVEGKDEERDSKVQGEVDAKDIELMKQIPKREGDNSSSRPAEDEDVGSKQPVTEASE</sequence>
<keyword id="KW-0002">3D-structure</keyword>
<keyword id="KW-0025">Alternative splicing</keyword>
<keyword id="KW-0342">GTP-binding</keyword>
<keyword id="KW-0343">GTPase activation</keyword>
<keyword id="KW-0547">Nucleotide-binding</keyword>
<keyword id="KW-0597">Phosphoprotein</keyword>
<keyword id="KW-1185">Reference proteome</keyword>
<feature type="chain" id="PRO_0000406607" description="Vacuolar protein sorting-associated protein 9A">
    <location>
        <begin position="1"/>
        <end position="520"/>
    </location>
</feature>
<feature type="domain" description="VPS9" evidence="1">
    <location>
        <begin position="102"/>
        <end position="246"/>
    </location>
</feature>
<feature type="region of interest" description="Disordered" evidence="2">
    <location>
        <begin position="267"/>
        <end position="331"/>
    </location>
</feature>
<feature type="region of interest" description="Disordered" evidence="2">
    <location>
        <begin position="396"/>
        <end position="433"/>
    </location>
</feature>
<feature type="region of interest" description="Disordered" evidence="2">
    <location>
        <begin position="464"/>
        <end position="520"/>
    </location>
</feature>
<feature type="compositionally biased region" description="Polar residues" evidence="2">
    <location>
        <begin position="287"/>
        <end position="323"/>
    </location>
</feature>
<feature type="compositionally biased region" description="Low complexity" evidence="2">
    <location>
        <begin position="396"/>
        <end position="407"/>
    </location>
</feature>
<feature type="compositionally biased region" description="Basic and acidic residues" evidence="2">
    <location>
        <begin position="413"/>
        <end position="433"/>
    </location>
</feature>
<feature type="compositionally biased region" description="Basic and acidic residues" evidence="2">
    <location>
        <begin position="464"/>
        <end position="497"/>
    </location>
</feature>
<feature type="binding site" evidence="4 9">
    <location>
        <position position="180"/>
    </location>
    <ligand>
        <name>GTP</name>
        <dbReference type="ChEBI" id="CHEBI:37565"/>
    </ligand>
</feature>
<feature type="binding site" evidence="4 9">
    <location>
        <position position="185"/>
    </location>
    <ligand>
        <name>GTP</name>
        <dbReference type="ChEBI" id="CHEBI:37565"/>
    </ligand>
</feature>
<feature type="modified residue" description="Phosphoserine" evidence="10 11">
    <location>
        <position position="330"/>
    </location>
</feature>
<feature type="mutagenesis site" description="Loss of interaction with RABF2B." evidence="4">
    <original>A</original>
    <variation>K</variation>
    <location>
        <position position="184"/>
    </location>
</feature>
<feature type="mutagenesis site" description="Loss of interaction with RABF2B. Decreases GEF activity 12-fold." evidence="4">
    <original>D</original>
    <variation>A</variation>
    <location>
        <position position="185"/>
    </location>
</feature>
<feature type="mutagenesis site" description="Loss of interaction with RABF2B." evidence="4">
    <original>D</original>
    <variation>E</variation>
    <location>
        <position position="185"/>
    </location>
</feature>
<feature type="mutagenesis site" description="Weakens interaction with RABF2B. Increases GEF activity." evidence="4">
    <original>D</original>
    <variation>N</variation>
    <location>
        <position position="185"/>
    </location>
</feature>
<feature type="mutagenesis site" description="Loss of interaction with RABF2B. Decreases GEF activity 25-fold." evidence="4">
    <original>Y</original>
    <variation>A</variation>
    <location>
        <position position="225"/>
    </location>
</feature>
<feature type="helix" evidence="12">
    <location>
        <begin position="20"/>
        <end position="22"/>
    </location>
</feature>
<feature type="helix" evidence="12">
    <location>
        <begin position="23"/>
        <end position="34"/>
    </location>
</feature>
<feature type="turn" evidence="12">
    <location>
        <begin position="35"/>
        <end position="38"/>
    </location>
</feature>
<feature type="helix" evidence="12">
    <location>
        <begin position="43"/>
        <end position="62"/>
    </location>
</feature>
<feature type="helix" evidence="12">
    <location>
        <begin position="65"/>
        <end position="67"/>
    </location>
</feature>
<feature type="helix" evidence="12">
    <location>
        <begin position="72"/>
        <end position="94"/>
    </location>
</feature>
<feature type="helix" evidence="12">
    <location>
        <begin position="99"/>
        <end position="115"/>
    </location>
</feature>
<feature type="turn" evidence="12">
    <location>
        <begin position="116"/>
        <end position="118"/>
    </location>
</feature>
<feature type="helix" evidence="12">
    <location>
        <begin position="121"/>
        <end position="124"/>
    </location>
</feature>
<feature type="helix" evidence="12">
    <location>
        <begin position="128"/>
        <end position="130"/>
    </location>
</feature>
<feature type="helix" evidence="12">
    <location>
        <begin position="137"/>
        <end position="144"/>
    </location>
</feature>
<feature type="helix" evidence="12">
    <location>
        <begin position="145"/>
        <end position="148"/>
    </location>
</feature>
<feature type="helix" evidence="12">
    <location>
        <begin position="152"/>
        <end position="176"/>
    </location>
</feature>
<feature type="helix" evidence="12">
    <location>
        <begin position="184"/>
        <end position="198"/>
    </location>
</feature>
<feature type="helix" evidence="12">
    <location>
        <begin position="203"/>
        <end position="213"/>
    </location>
</feature>
<feature type="turn" evidence="12">
    <location>
        <begin position="216"/>
        <end position="218"/>
    </location>
</feature>
<feature type="helix" evidence="12">
    <location>
        <begin position="221"/>
        <end position="238"/>
    </location>
</feature>
<feature type="turn" evidence="12">
    <location>
        <begin position="242"/>
        <end position="246"/>
    </location>
</feature>
<feature type="helix" evidence="12">
    <location>
        <begin position="249"/>
        <end position="261"/>
    </location>
</feature>
<evidence type="ECO:0000255" key="1">
    <source>
        <dbReference type="PROSITE-ProRule" id="PRU00550"/>
    </source>
</evidence>
<evidence type="ECO:0000256" key="2">
    <source>
        <dbReference type="SAM" id="MobiDB-lite"/>
    </source>
</evidence>
<evidence type="ECO:0000269" key="3">
    <source>
    </source>
</evidence>
<evidence type="ECO:0000269" key="4">
    <source>
    </source>
</evidence>
<evidence type="ECO:0000303" key="5">
    <source>
    </source>
</evidence>
<evidence type="ECO:0000305" key="6"/>
<evidence type="ECO:0000312" key="7">
    <source>
        <dbReference type="Araport" id="AT3G19770"/>
    </source>
</evidence>
<evidence type="ECO:0000312" key="8">
    <source>
        <dbReference type="EMBL" id="BAB01291.1"/>
    </source>
</evidence>
<evidence type="ECO:0007744" key="9">
    <source>
        <dbReference type="PDB" id="2EFC"/>
    </source>
</evidence>
<evidence type="ECO:0007744" key="10">
    <source>
    </source>
</evidence>
<evidence type="ECO:0007744" key="11">
    <source>
    </source>
</evidence>
<evidence type="ECO:0007829" key="12">
    <source>
        <dbReference type="PDB" id="2EFE"/>
    </source>
</evidence>
<accession>Q9LT31</accession>
<gene>
    <name evidence="5" type="primary">VPS9A</name>
    <name evidence="6" type="synonym">VPS9</name>
    <name evidence="7" type="ordered locus">At3g19770</name>
    <name evidence="8" type="ORF">MMB12.26</name>
</gene>
<protein>
    <recommendedName>
        <fullName evidence="6">Vacuolar protein sorting-associated protein 9A</fullName>
        <shortName evidence="5">AtVPS9a</shortName>
    </recommendedName>
</protein>
<organism>
    <name type="scientific">Arabidopsis thaliana</name>
    <name type="common">Mouse-ear cress</name>
    <dbReference type="NCBI Taxonomy" id="3702"/>
    <lineage>
        <taxon>Eukaryota</taxon>
        <taxon>Viridiplantae</taxon>
        <taxon>Streptophyta</taxon>
        <taxon>Embryophyta</taxon>
        <taxon>Tracheophyta</taxon>
        <taxon>Spermatophyta</taxon>
        <taxon>Magnoliopsida</taxon>
        <taxon>eudicotyledons</taxon>
        <taxon>Gunneridae</taxon>
        <taxon>Pentapetalae</taxon>
        <taxon>rosids</taxon>
        <taxon>malvids</taxon>
        <taxon>Brassicales</taxon>
        <taxon>Brassicaceae</taxon>
        <taxon>Camelineae</taxon>
        <taxon>Arabidopsis</taxon>
    </lineage>
</organism>
<proteinExistence type="evidence at protein level"/>
<comment type="function">
    <text evidence="3 4">Functions as a guanine nucleotide exchange factor (GEF) for Rab small GTPases. Activates specifically RABF1, RABF2A and RABF2B proteins. Required for early stages of embryogenesis, cytokinesis, embryogenesis, and organ development. Is essential for the establishment or maintenance of the polar localization of the auxin efflux carrier PIN1.</text>
</comment>
<comment type="subunit">
    <text evidence="3 4">Homodimer. The homodimer interacts with RABF2B. Interacts with RABF1 and RABF2A.</text>
</comment>
<comment type="alternative products">
    <event type="alternative splicing"/>
    <isoform>
        <id>Q9LT31-1</id>
        <name>1</name>
        <sequence type="displayed"/>
    </isoform>
    <text>A number of isoforms are produced. According to EST sequences.</text>
</comment>
<comment type="tissue specificity">
    <text evidence="3">Widely expressed.</text>
</comment>
<comment type="disruption phenotype">
    <text evidence="3">Embryonic lethality when homozygous. Embryogenesis arrested at the torpedo stage.</text>
</comment>
<name>VPS9A_ARATH</name>
<reference key="1">
    <citation type="journal article" date="2000" name="DNA Res.">
        <title>Structural analysis of Arabidopsis thaliana chromosome 3. I. Sequence features of the regions of 4,504,864 bp covered by sixty P1 and TAC clones.</title>
        <authorList>
            <person name="Sato S."/>
            <person name="Nakamura Y."/>
            <person name="Kaneko T."/>
            <person name="Katoh T."/>
            <person name="Asamizu E."/>
            <person name="Tabata S."/>
        </authorList>
    </citation>
    <scope>NUCLEOTIDE SEQUENCE [LARGE SCALE GENOMIC DNA]</scope>
    <source>
        <strain>cv. Columbia</strain>
    </source>
</reference>
<reference key="2">
    <citation type="journal article" date="2000" name="DNA Res.">
        <title>Structural analysis of Arabidopsis thaliana chromosome 3. II. Sequence features of the 4,251,695 bp regions covered by 90 P1, TAC and BAC clones.</title>
        <authorList>
            <person name="Kaneko T."/>
            <person name="Katoh T."/>
            <person name="Sato S."/>
            <person name="Nakamura Y."/>
            <person name="Asamizu E."/>
            <person name="Tabata S."/>
        </authorList>
    </citation>
    <scope>NUCLEOTIDE SEQUENCE [LARGE SCALE GENOMIC DNA]</scope>
    <source>
        <strain>cv. Columbia</strain>
    </source>
</reference>
<reference key="3">
    <citation type="journal article" date="2017" name="Plant J.">
        <title>Araport11: a complete reannotation of the Arabidopsis thaliana reference genome.</title>
        <authorList>
            <person name="Cheng C.Y."/>
            <person name="Krishnakumar V."/>
            <person name="Chan A.P."/>
            <person name="Thibaud-Nissen F."/>
            <person name="Schobel S."/>
            <person name="Town C.D."/>
        </authorList>
    </citation>
    <scope>GENOME REANNOTATION</scope>
    <source>
        <strain>cv. Columbia</strain>
    </source>
</reference>
<reference key="4">
    <citation type="journal article" date="2003" name="Science">
        <title>Empirical analysis of transcriptional activity in the Arabidopsis genome.</title>
        <authorList>
            <person name="Yamada K."/>
            <person name="Lim J."/>
            <person name="Dale J.M."/>
            <person name="Chen H."/>
            <person name="Shinn P."/>
            <person name="Palm C.J."/>
            <person name="Southwick A.M."/>
            <person name="Wu H.C."/>
            <person name="Kim C.J."/>
            <person name="Nguyen M."/>
            <person name="Pham P.K."/>
            <person name="Cheuk R.F."/>
            <person name="Karlin-Newmann G."/>
            <person name="Liu S.X."/>
            <person name="Lam B."/>
            <person name="Sakano H."/>
            <person name="Wu T."/>
            <person name="Yu G."/>
            <person name="Miranda M."/>
            <person name="Quach H.L."/>
            <person name="Tripp M."/>
            <person name="Chang C.H."/>
            <person name="Lee J.M."/>
            <person name="Toriumi M.J."/>
            <person name="Chan M.M."/>
            <person name="Tang C.C."/>
            <person name="Onodera C.S."/>
            <person name="Deng J.M."/>
            <person name="Akiyama K."/>
            <person name="Ansari Y."/>
            <person name="Arakawa T."/>
            <person name="Banh J."/>
            <person name="Banno F."/>
            <person name="Bowser L."/>
            <person name="Brooks S.Y."/>
            <person name="Carninci P."/>
            <person name="Chao Q."/>
            <person name="Choy N."/>
            <person name="Enju A."/>
            <person name="Goldsmith A.D."/>
            <person name="Gurjal M."/>
            <person name="Hansen N.F."/>
            <person name="Hayashizaki Y."/>
            <person name="Johnson-Hopson C."/>
            <person name="Hsuan V.W."/>
            <person name="Iida K."/>
            <person name="Karnes M."/>
            <person name="Khan S."/>
            <person name="Koesema E."/>
            <person name="Ishida J."/>
            <person name="Jiang P.X."/>
            <person name="Jones T."/>
            <person name="Kawai J."/>
            <person name="Kamiya A."/>
            <person name="Meyers C."/>
            <person name="Nakajima M."/>
            <person name="Narusaka M."/>
            <person name="Seki M."/>
            <person name="Sakurai T."/>
            <person name="Satou M."/>
            <person name="Tamse R."/>
            <person name="Vaysberg M."/>
            <person name="Wallender E.K."/>
            <person name="Wong C."/>
            <person name="Yamamura Y."/>
            <person name="Yuan S."/>
            <person name="Shinozaki K."/>
            <person name="Davis R.W."/>
            <person name="Theologis A."/>
            <person name="Ecker J.R."/>
        </authorList>
    </citation>
    <scope>NUCLEOTIDE SEQUENCE [LARGE SCALE MRNA]</scope>
    <source>
        <strain>cv. Columbia</strain>
    </source>
</reference>
<reference key="5">
    <citation type="journal article" date="2007" name="Plant Cell">
        <title>VPS9a, the common activator for two distinct types of Rab5 GTPases, is essential for the development of Arabidopsis thaliana.</title>
        <authorList>
            <person name="Goh T."/>
            <person name="Uchida W."/>
            <person name="Arakawa S."/>
            <person name="Ito E."/>
            <person name="Dainobu T."/>
            <person name="Ebine K."/>
            <person name="Takeuchi M."/>
            <person name="Sato K."/>
            <person name="Ueda T."/>
            <person name="Nakano A."/>
        </authorList>
    </citation>
    <scope>FUNCTION</scope>
    <scope>INTERACTION WITH RABF1; RABF2A AND RABF2B</scope>
    <scope>TISSUE SPECIFICITY</scope>
    <scope>DISRUPTION PHENOTYPE</scope>
</reference>
<reference key="6">
    <citation type="journal article" date="2008" name="J. Proteome Res.">
        <title>Site-specific phosphorylation profiling of Arabidopsis proteins by mass spectrometry and peptide chip analysis.</title>
        <authorList>
            <person name="de la Fuente van Bentem S."/>
            <person name="Anrather D."/>
            <person name="Dohnal I."/>
            <person name="Roitinger E."/>
            <person name="Csaszar E."/>
            <person name="Joore J."/>
            <person name="Buijnink J."/>
            <person name="Carreri A."/>
            <person name="Forzani C."/>
            <person name="Lorkovic Z.J."/>
            <person name="Barta A."/>
            <person name="Lecourieux D."/>
            <person name="Verhounig A."/>
            <person name="Jonak C."/>
            <person name="Hirt H."/>
        </authorList>
    </citation>
    <scope>PHOSPHORYLATION [LARGE SCALE ANALYSIS] AT SER-330</scope>
    <scope>IDENTIFICATION BY MASS SPECTROMETRY [LARGE SCALE ANALYSIS]</scope>
    <source>
        <tissue>Root</tissue>
    </source>
</reference>
<reference key="7">
    <citation type="journal article" date="2009" name="J. Proteomics">
        <title>Phosphoproteomic analysis of nuclei-enriched fractions from Arabidopsis thaliana.</title>
        <authorList>
            <person name="Jones A.M.E."/>
            <person name="MacLean D."/>
            <person name="Studholme D.J."/>
            <person name="Serna-Sanz A."/>
            <person name="Andreasson E."/>
            <person name="Rathjen J.P."/>
            <person name="Peck S.C."/>
        </authorList>
    </citation>
    <scope>IDENTIFICATION BY MASS SPECTROMETRY [LARGE SCALE ANALYSIS]</scope>
    <source>
        <strain>cv. Columbia</strain>
    </source>
</reference>
<reference key="8">
    <citation type="journal article" date="2009" name="Plant Physiol.">
        <title>Large-scale Arabidopsis phosphoproteome profiling reveals novel chloroplast kinase substrates and phosphorylation networks.</title>
        <authorList>
            <person name="Reiland S."/>
            <person name="Messerli G."/>
            <person name="Baerenfaller K."/>
            <person name="Gerrits B."/>
            <person name="Endler A."/>
            <person name="Grossmann J."/>
            <person name="Gruissem W."/>
            <person name="Baginsky S."/>
        </authorList>
    </citation>
    <scope>PHOSPHORYLATION [LARGE SCALE ANALYSIS] AT SER-330</scope>
    <scope>IDENTIFICATION BY MASS SPECTROMETRY [LARGE SCALE ANALYSIS]</scope>
</reference>
<reference key="9">
    <citation type="journal article" date="2010" name="J. Biol. Chem.">
        <title>GDP-bound and nucleotide-free intermediates of the guanine nucleotide exchange in the Rab5.Vps9 system.</title>
        <authorList>
            <person name="Uejima T."/>
            <person name="Ihara K."/>
            <person name="Goh T."/>
            <person name="Ito E."/>
            <person name="Sunada M."/>
            <person name="Ueda T."/>
            <person name="Nakano A."/>
            <person name="Wakatsuki S."/>
        </authorList>
    </citation>
    <scope>X-RAY CRYSTALLOGRAPHY (2.08 ANGSTROMS) OF 1-265 IN COMPLEX WITH GDP</scope>
    <scope>FUNCTION</scope>
    <scope>SUBUNIT</scope>
    <scope>INTERACTION WITH RABF2B</scope>
    <scope>MUTAGENESIS OF ALA-184; ASP-185 AND TYR-225</scope>
</reference>